<protein>
    <recommendedName>
        <fullName evidence="1">Small ribosomal subunit protein uS8</fullName>
    </recommendedName>
    <alternativeName>
        <fullName evidence="2">30S ribosomal protein S8</fullName>
    </alternativeName>
</protein>
<keyword id="KW-0687">Ribonucleoprotein</keyword>
<keyword id="KW-0689">Ribosomal protein</keyword>
<keyword id="KW-0694">RNA-binding</keyword>
<keyword id="KW-0699">rRNA-binding</keyword>
<feature type="chain" id="PRO_1000085939" description="Small ribosomal subunit protein uS8">
    <location>
        <begin position="1"/>
        <end position="135"/>
    </location>
</feature>
<dbReference type="EMBL" id="CP000850">
    <property type="protein sequence ID" value="ABW00083.1"/>
    <property type="molecule type" value="Genomic_DNA"/>
</dbReference>
<dbReference type="SMR" id="A8M515"/>
<dbReference type="STRING" id="391037.Sare_4301"/>
<dbReference type="KEGG" id="saq:Sare_4301"/>
<dbReference type="PATRIC" id="fig|391037.6.peg.4342"/>
<dbReference type="eggNOG" id="COG0096">
    <property type="taxonomic scope" value="Bacteria"/>
</dbReference>
<dbReference type="HOGENOM" id="CLU_098428_0_1_11"/>
<dbReference type="OrthoDB" id="9802617at2"/>
<dbReference type="GO" id="GO:1990904">
    <property type="term" value="C:ribonucleoprotein complex"/>
    <property type="evidence" value="ECO:0007669"/>
    <property type="project" value="UniProtKB-KW"/>
</dbReference>
<dbReference type="GO" id="GO:0005840">
    <property type="term" value="C:ribosome"/>
    <property type="evidence" value="ECO:0007669"/>
    <property type="project" value="UniProtKB-KW"/>
</dbReference>
<dbReference type="GO" id="GO:0019843">
    <property type="term" value="F:rRNA binding"/>
    <property type="evidence" value="ECO:0007669"/>
    <property type="project" value="UniProtKB-UniRule"/>
</dbReference>
<dbReference type="GO" id="GO:0003735">
    <property type="term" value="F:structural constituent of ribosome"/>
    <property type="evidence" value="ECO:0007669"/>
    <property type="project" value="InterPro"/>
</dbReference>
<dbReference type="GO" id="GO:0006412">
    <property type="term" value="P:translation"/>
    <property type="evidence" value="ECO:0007669"/>
    <property type="project" value="UniProtKB-UniRule"/>
</dbReference>
<dbReference type="FunFam" id="3.30.1370.30:FF:000002">
    <property type="entry name" value="30S ribosomal protein S8"/>
    <property type="match status" value="1"/>
</dbReference>
<dbReference type="FunFam" id="3.30.1490.10:FF:000001">
    <property type="entry name" value="30S ribosomal protein S8"/>
    <property type="match status" value="1"/>
</dbReference>
<dbReference type="Gene3D" id="3.30.1370.30">
    <property type="match status" value="1"/>
</dbReference>
<dbReference type="Gene3D" id="3.30.1490.10">
    <property type="match status" value="1"/>
</dbReference>
<dbReference type="HAMAP" id="MF_01302_B">
    <property type="entry name" value="Ribosomal_uS8_B"/>
    <property type="match status" value="1"/>
</dbReference>
<dbReference type="InterPro" id="IPR000630">
    <property type="entry name" value="Ribosomal_uS8"/>
</dbReference>
<dbReference type="InterPro" id="IPR047863">
    <property type="entry name" value="Ribosomal_uS8_CS"/>
</dbReference>
<dbReference type="InterPro" id="IPR035987">
    <property type="entry name" value="Ribosomal_uS8_sf"/>
</dbReference>
<dbReference type="NCBIfam" id="NF001109">
    <property type="entry name" value="PRK00136.1"/>
    <property type="match status" value="1"/>
</dbReference>
<dbReference type="PANTHER" id="PTHR11758">
    <property type="entry name" value="40S RIBOSOMAL PROTEIN S15A"/>
    <property type="match status" value="1"/>
</dbReference>
<dbReference type="Pfam" id="PF00410">
    <property type="entry name" value="Ribosomal_S8"/>
    <property type="match status" value="1"/>
</dbReference>
<dbReference type="SUPFAM" id="SSF56047">
    <property type="entry name" value="Ribosomal protein S8"/>
    <property type="match status" value="1"/>
</dbReference>
<dbReference type="PROSITE" id="PS00053">
    <property type="entry name" value="RIBOSOMAL_S8"/>
    <property type="match status" value="1"/>
</dbReference>
<evidence type="ECO:0000255" key="1">
    <source>
        <dbReference type="HAMAP-Rule" id="MF_01302"/>
    </source>
</evidence>
<evidence type="ECO:0000305" key="2"/>
<proteinExistence type="inferred from homology"/>
<comment type="function">
    <text evidence="1">One of the primary rRNA binding proteins, it binds directly to 16S rRNA central domain where it helps coordinate assembly of the platform of the 30S subunit.</text>
</comment>
<comment type="subunit">
    <text evidence="1">Part of the 30S ribosomal subunit. Contacts proteins S5 and S12.</text>
</comment>
<comment type="similarity">
    <text evidence="1">Belongs to the universal ribosomal protein uS8 family.</text>
</comment>
<reference key="1">
    <citation type="submission" date="2007-10" db="EMBL/GenBank/DDBJ databases">
        <title>Complete sequence of Salinispora arenicola CNS-205.</title>
        <authorList>
            <consortium name="US DOE Joint Genome Institute"/>
            <person name="Copeland A."/>
            <person name="Lucas S."/>
            <person name="Lapidus A."/>
            <person name="Barry K."/>
            <person name="Glavina del Rio T."/>
            <person name="Dalin E."/>
            <person name="Tice H."/>
            <person name="Pitluck S."/>
            <person name="Foster B."/>
            <person name="Schmutz J."/>
            <person name="Larimer F."/>
            <person name="Land M."/>
            <person name="Hauser L."/>
            <person name="Kyrpides N."/>
            <person name="Ivanova N."/>
            <person name="Jensen P.R."/>
            <person name="Moore B.S."/>
            <person name="Penn K."/>
            <person name="Jenkins C."/>
            <person name="Udwary D."/>
            <person name="Xiang L."/>
            <person name="Gontang E."/>
            <person name="Richardson P."/>
        </authorList>
    </citation>
    <scope>NUCLEOTIDE SEQUENCE [LARGE SCALE GENOMIC DNA]</scope>
    <source>
        <strain>CNS-205</strain>
    </source>
</reference>
<organism>
    <name type="scientific">Salinispora arenicola (strain CNS-205)</name>
    <dbReference type="NCBI Taxonomy" id="391037"/>
    <lineage>
        <taxon>Bacteria</taxon>
        <taxon>Bacillati</taxon>
        <taxon>Actinomycetota</taxon>
        <taxon>Actinomycetes</taxon>
        <taxon>Micromonosporales</taxon>
        <taxon>Micromonosporaceae</taxon>
        <taxon>Salinispora</taxon>
    </lineage>
</organism>
<name>RS8_SALAI</name>
<accession>A8M515</accession>
<sequence length="135" mass="14971">MTMTDPIADMLTRLRNANQAYHDRVTMPYSKIKANIAEVLKAEGYISTWLVEEPEESVVGKRLVVELKYGQNRERSLAGIKRVSKPGLRVYAKSGELPRVLGGLGVAIISTSQGLLTDRQARKRSVGGEVLAFVW</sequence>
<gene>
    <name evidence="1" type="primary">rpsH</name>
    <name type="ordered locus">Sare_4301</name>
</gene>